<organism>
    <name type="scientific">Saccharomyces cerevisiae (strain ATCC 204508 / S288c)</name>
    <name type="common">Baker's yeast</name>
    <dbReference type="NCBI Taxonomy" id="559292"/>
    <lineage>
        <taxon>Eukaryota</taxon>
        <taxon>Fungi</taxon>
        <taxon>Dikarya</taxon>
        <taxon>Ascomycota</taxon>
        <taxon>Saccharomycotina</taxon>
        <taxon>Saccharomycetes</taxon>
        <taxon>Saccharomycetales</taxon>
        <taxon>Saccharomycetaceae</taxon>
        <taxon>Saccharomyces</taxon>
    </lineage>
</organism>
<accession>P40537</accession>
<accession>D6VVQ0</accession>
<proteinExistence type="evidence at protein level"/>
<reference key="1">
    <citation type="submission" date="1995-05" db="EMBL/GenBank/DDBJ databases">
        <authorList>
            <person name="Meluh P.B."/>
            <person name="Koshland D.E."/>
        </authorList>
    </citation>
    <scope>NUCLEOTIDE SEQUENCE [GENOMIC DNA]</scope>
    <source>
        <strain>S288c / YPH1</strain>
    </source>
</reference>
<reference key="2">
    <citation type="journal article" date="1997" name="Nature">
        <title>The nucleotide sequence of Saccharomyces cerevisiae chromosome IX.</title>
        <authorList>
            <person name="Churcher C.M."/>
            <person name="Bowman S."/>
            <person name="Badcock K."/>
            <person name="Bankier A.T."/>
            <person name="Brown D."/>
            <person name="Chillingworth T."/>
            <person name="Connor R."/>
            <person name="Devlin K."/>
            <person name="Gentles S."/>
            <person name="Hamlin N."/>
            <person name="Harris D.E."/>
            <person name="Horsnell T."/>
            <person name="Hunt S."/>
            <person name="Jagels K."/>
            <person name="Jones M."/>
            <person name="Lye G."/>
            <person name="Moule S."/>
            <person name="Odell C."/>
            <person name="Pearson D."/>
            <person name="Rajandream M.A."/>
            <person name="Rice P."/>
            <person name="Rowley N."/>
            <person name="Skelton J."/>
            <person name="Smith V."/>
            <person name="Walsh S.V."/>
            <person name="Whitehead S."/>
            <person name="Barrell B.G."/>
        </authorList>
    </citation>
    <scope>NUCLEOTIDE SEQUENCE [LARGE SCALE GENOMIC DNA]</scope>
    <source>
        <strain>ATCC 204508 / S288c</strain>
    </source>
</reference>
<reference key="3">
    <citation type="journal article" date="2014" name="G3 (Bethesda)">
        <title>The reference genome sequence of Saccharomyces cerevisiae: Then and now.</title>
        <authorList>
            <person name="Engel S.R."/>
            <person name="Dietrich F.S."/>
            <person name="Fisk D.G."/>
            <person name="Binkley G."/>
            <person name="Balakrishnan R."/>
            <person name="Costanzo M.C."/>
            <person name="Dwight S.S."/>
            <person name="Hitz B.C."/>
            <person name="Karra K."/>
            <person name="Nash R.S."/>
            <person name="Weng S."/>
            <person name="Wong E.D."/>
            <person name="Lloyd P."/>
            <person name="Skrzypek M.S."/>
            <person name="Miyasato S.R."/>
            <person name="Simison M."/>
            <person name="Cherry J.M."/>
        </authorList>
    </citation>
    <scope>GENOME REANNOTATION</scope>
    <source>
        <strain>ATCC 204508 / S288c</strain>
    </source>
</reference>
<reference key="4">
    <citation type="journal article" date="2003" name="Nature">
        <title>Global analysis of protein expression in yeast.</title>
        <authorList>
            <person name="Ghaemmaghami S."/>
            <person name="Huh W.-K."/>
            <person name="Bower K."/>
            <person name="Howson R.W."/>
            <person name="Belle A."/>
            <person name="Dephoure N."/>
            <person name="O'Shea E.K."/>
            <person name="Weissman J.S."/>
        </authorList>
    </citation>
    <scope>LEVEL OF PROTEIN EXPRESSION [LARGE SCALE ANALYSIS]</scope>
</reference>
<reference key="5">
    <citation type="journal article" date="2008" name="Mol. Cell. Proteomics">
        <title>A multidimensional chromatography technology for in-depth phosphoproteome analysis.</title>
        <authorList>
            <person name="Albuquerque C.P."/>
            <person name="Smolka M.B."/>
            <person name="Payne S.H."/>
            <person name="Bafna V."/>
            <person name="Eng J."/>
            <person name="Zhou H."/>
        </authorList>
    </citation>
    <scope>PHOSPHORYLATION [LARGE SCALE ANALYSIS] AT SER-788 AND SER-903</scope>
    <scope>IDENTIFICATION BY MASS SPECTROMETRY [LARGE SCALE ANALYSIS]</scope>
</reference>
<reference key="6">
    <citation type="journal article" date="2009" name="Science">
        <title>Global analysis of Cdk1 substrate phosphorylation sites provides insights into evolution.</title>
        <authorList>
            <person name="Holt L.J."/>
            <person name="Tuch B.B."/>
            <person name="Villen J."/>
            <person name="Johnson A.D."/>
            <person name="Gygi S.P."/>
            <person name="Morgan D.O."/>
        </authorList>
    </citation>
    <scope>PHOSPHORYLATION [LARGE SCALE ANALYSIS] AT SER-983 AND SER-984</scope>
    <scope>IDENTIFICATION BY MASS SPECTROMETRY [LARGE SCALE ANALYSIS]</scope>
</reference>
<protein>
    <recommendedName>
        <fullName>Ubiquitin-like-specific protease 2</fullName>
        <ecNumber>3.4.22.-</ecNumber>
    </recommendedName>
</protein>
<evidence type="ECO:0000256" key="1">
    <source>
        <dbReference type="SAM" id="MobiDB-lite"/>
    </source>
</evidence>
<evidence type="ECO:0000269" key="2">
    <source>
    </source>
</evidence>
<evidence type="ECO:0000305" key="3"/>
<evidence type="ECO:0007744" key="4">
    <source>
    </source>
</evidence>
<evidence type="ECO:0007744" key="5">
    <source>
    </source>
</evidence>
<evidence type="ECO:0007829" key="6">
    <source>
        <dbReference type="PDB" id="5LNB"/>
    </source>
</evidence>
<evidence type="ECO:0007829" key="7">
    <source>
        <dbReference type="PDB" id="5V1A"/>
    </source>
</evidence>
<gene>
    <name type="primary">ULP2</name>
    <name type="synonym">SMT4</name>
    <name type="ordered locus">YIL031W</name>
</gene>
<dbReference type="EC" id="3.4.22.-"/>
<dbReference type="EMBL" id="Z46861">
    <property type="protein sequence ID" value="CAA86920.1"/>
    <property type="molecule type" value="Genomic_DNA"/>
</dbReference>
<dbReference type="EMBL" id="U27832">
    <property type="protein sequence ID" value="AAA69556.1"/>
    <property type="molecule type" value="Genomic_DNA"/>
</dbReference>
<dbReference type="EMBL" id="BK006942">
    <property type="protein sequence ID" value="DAA08516.1"/>
    <property type="molecule type" value="Genomic_DNA"/>
</dbReference>
<dbReference type="PIR" id="S49947">
    <property type="entry name" value="S49947"/>
</dbReference>
<dbReference type="RefSeq" id="NP_012233.1">
    <property type="nucleotide sequence ID" value="NM_001179381.1"/>
</dbReference>
<dbReference type="PDB" id="5LNB">
    <property type="method" value="X-ray"/>
    <property type="resolution" value="2.30 A"/>
    <property type="chains" value="B=411-710"/>
</dbReference>
<dbReference type="PDB" id="5V1A">
    <property type="method" value="X-ray"/>
    <property type="resolution" value="2.14 A"/>
    <property type="chains" value="B=821-845"/>
</dbReference>
<dbReference type="PDBsum" id="5LNB"/>
<dbReference type="PDBsum" id="5V1A"/>
<dbReference type="SMR" id="P40537"/>
<dbReference type="BioGRID" id="34958">
    <property type="interactions" value="357"/>
</dbReference>
<dbReference type="DIP" id="DIP-5489N"/>
<dbReference type="FunCoup" id="P40537">
    <property type="interactions" value="323"/>
</dbReference>
<dbReference type="IntAct" id="P40537">
    <property type="interactions" value="14"/>
</dbReference>
<dbReference type="STRING" id="4932.YIL031W"/>
<dbReference type="MEROPS" id="C48.005"/>
<dbReference type="iPTMnet" id="P40537"/>
<dbReference type="PaxDb" id="4932-YIL031W"/>
<dbReference type="PeptideAtlas" id="P40537"/>
<dbReference type="EnsemblFungi" id="YIL031W_mRNA">
    <property type="protein sequence ID" value="YIL031W"/>
    <property type="gene ID" value="YIL031W"/>
</dbReference>
<dbReference type="GeneID" id="854780"/>
<dbReference type="KEGG" id="sce:YIL031W"/>
<dbReference type="AGR" id="SGD:S000001293"/>
<dbReference type="SGD" id="S000001293">
    <property type="gene designation" value="ULP2"/>
</dbReference>
<dbReference type="VEuPathDB" id="FungiDB:YIL031W"/>
<dbReference type="eggNOG" id="KOG0779">
    <property type="taxonomic scope" value="Eukaryota"/>
</dbReference>
<dbReference type="GeneTree" id="ENSGT00940000172065"/>
<dbReference type="HOGENOM" id="CLU_008911_0_0_1"/>
<dbReference type="InParanoid" id="P40537"/>
<dbReference type="OMA" id="FKPSLCY"/>
<dbReference type="OrthoDB" id="442460at2759"/>
<dbReference type="BioCyc" id="YEAST:G3O-31304-MONOMER"/>
<dbReference type="BRENDA" id="3.4.22.B67">
    <property type="organism ID" value="984"/>
</dbReference>
<dbReference type="Reactome" id="R-SCE-3065679">
    <property type="pathway name" value="SUMO is proteolytically processed"/>
</dbReference>
<dbReference type="Reactome" id="R-SCE-6791226">
    <property type="pathway name" value="Major pathway of rRNA processing in the nucleolus and cytosol"/>
</dbReference>
<dbReference type="BioGRID-ORCS" id="854780">
    <property type="hits" value="4 hits in 10 CRISPR screens"/>
</dbReference>
<dbReference type="PRO" id="PR:P40537"/>
<dbReference type="Proteomes" id="UP000002311">
    <property type="component" value="Chromosome IX"/>
</dbReference>
<dbReference type="RNAct" id="P40537">
    <property type="molecule type" value="protein"/>
</dbReference>
<dbReference type="GO" id="GO:0000785">
    <property type="term" value="C:chromatin"/>
    <property type="evidence" value="ECO:0000314"/>
    <property type="project" value="SGD"/>
</dbReference>
<dbReference type="GO" id="GO:0005634">
    <property type="term" value="C:nucleus"/>
    <property type="evidence" value="ECO:0000314"/>
    <property type="project" value="SGD"/>
</dbReference>
<dbReference type="GO" id="GO:0008234">
    <property type="term" value="F:cysteine-type peptidase activity"/>
    <property type="evidence" value="ECO:0000314"/>
    <property type="project" value="SGD"/>
</dbReference>
<dbReference type="GO" id="GO:0016929">
    <property type="term" value="F:deSUMOylase activity"/>
    <property type="evidence" value="ECO:0000314"/>
    <property type="project" value="SGD"/>
</dbReference>
<dbReference type="GO" id="GO:0003711">
    <property type="term" value="F:transcription elongation factor activity"/>
    <property type="evidence" value="ECO:0000314"/>
    <property type="project" value="SGD"/>
</dbReference>
<dbReference type="GO" id="GO:0030261">
    <property type="term" value="P:chromosome condensation"/>
    <property type="evidence" value="ECO:0000315"/>
    <property type="project" value="SGD"/>
</dbReference>
<dbReference type="GO" id="GO:0007094">
    <property type="term" value="P:mitotic spindle assembly checkpoint signaling"/>
    <property type="evidence" value="ECO:0000315"/>
    <property type="project" value="SGD"/>
</dbReference>
<dbReference type="GO" id="GO:0006276">
    <property type="term" value="P:plasmid maintenance"/>
    <property type="evidence" value="ECO:0000315"/>
    <property type="project" value="SGD"/>
</dbReference>
<dbReference type="GO" id="GO:0016926">
    <property type="term" value="P:protein desumoylation"/>
    <property type="evidence" value="ECO:0000314"/>
    <property type="project" value="SGD"/>
</dbReference>
<dbReference type="GO" id="GO:0006508">
    <property type="term" value="P:proteolysis"/>
    <property type="evidence" value="ECO:0007669"/>
    <property type="project" value="UniProtKB-KW"/>
</dbReference>
<dbReference type="FunFam" id="3.40.395.10:FF:000011">
    <property type="entry name" value="Ulp2p"/>
    <property type="match status" value="1"/>
</dbReference>
<dbReference type="Gene3D" id="3.40.395.10">
    <property type="entry name" value="Adenoviral Proteinase, Chain A"/>
    <property type="match status" value="1"/>
</dbReference>
<dbReference type="InterPro" id="IPR038765">
    <property type="entry name" value="Papain-like_cys_pep_sf"/>
</dbReference>
<dbReference type="InterPro" id="IPR003653">
    <property type="entry name" value="Peptidase_C48_C"/>
</dbReference>
<dbReference type="PANTHER" id="PTHR46915:SF2">
    <property type="entry name" value="UBIQUITIN-LIKE PROTEASE 4"/>
    <property type="match status" value="1"/>
</dbReference>
<dbReference type="PANTHER" id="PTHR46915">
    <property type="entry name" value="UBIQUITIN-LIKE PROTEASE 4-RELATED"/>
    <property type="match status" value="1"/>
</dbReference>
<dbReference type="Pfam" id="PF02902">
    <property type="entry name" value="Peptidase_C48"/>
    <property type="match status" value="1"/>
</dbReference>
<dbReference type="SUPFAM" id="SSF54001">
    <property type="entry name" value="Cysteine proteinases"/>
    <property type="match status" value="1"/>
</dbReference>
<dbReference type="PROSITE" id="PS50600">
    <property type="entry name" value="ULP_PROTEASE"/>
    <property type="match status" value="1"/>
</dbReference>
<keyword id="KW-0002">3D-structure</keyword>
<keyword id="KW-0378">Hydrolase</keyword>
<keyword id="KW-0597">Phosphoprotein</keyword>
<keyword id="KW-0645">Protease</keyword>
<keyword id="KW-1185">Reference proteome</keyword>
<keyword id="KW-0788">Thiol protease</keyword>
<name>ULP2_YEAST</name>
<comment type="function">
    <text>Insertion mutation in SMT4 confers temperature and benomyl sensitivity; high copy suppressor of a temperature sensitive mutation in MIF2.</text>
</comment>
<comment type="miscellaneous">
    <text evidence="2">Present with 450 molecules/cell in log phase SD medium.</text>
</comment>
<comment type="similarity">
    <text evidence="3">Belongs to the peptidase C48 family.</text>
</comment>
<sequence length="1034" mass="116883">MSARKRKFNSLKPLDTLNSSRASSPRSSASLPPKRYNTFRKDPKIVDHLNNASTKDFLPVLSMNSESKRQIELSDNDVDNNDEGEGVNSGCSDQDFEPLQSSPLKRHSSLKSTSNGLLFQMSNNLGNGSPEPAVASTSPNGSIISTKLNLNGQFSCVDSKTLRIYRHKAPCIMTFVSDHNHPKFSLYFQQSVIYNSQVNLLDDVELIILDKKNSFMAIILKDLKKVKMILDVNNSSININTNILIWSTASSASNKKIKSIKRFLLMSYSSSIKVEILDHKEQILERLKHLIHPISSSSPSLNMERAINSTKNAFDSLRLKKTKLSTNDDESPQIHTHFLSNKPHGLQSLTKRTRIASLGKKEHSISVPKSNISPSDFYNTNGTETLQSHAVSQLRRSNRFKDVSDPANSNSNSEFDDATTEFETPELFKPSLCYKFNDGSSYTITNQDFKCLFNKDWVNDSILDFFTKFYIESSIEKSIIKREQVHLMSSFFYTKLISNPADYYSNVKKWVNNTDLFSKKYVVIPINISYHWFSCIITNLDAILDFHQNKDKNDAINSDEISINNPLVNILTFDSLRQTHSREIDPIKEFLISYALDKYSIQLDKTQIKMKTCPVPQQPNMSDCGVHVILNIRKFFENPVETIDVWKNSKIKSKHFTAKMINKYFDKNERNSARKNLRHTLKLLQLNYISYLKKENLYEEVMQMEEKKSTNINNNENYDDDDEEIQIIENIDQSSKDNNAQLTSEPPCSRSSSISTTEREPTELHNSVVRQPTGEIITDNEDPVRAASPETASVSPPIRHNILKSSSPFISESANETEQEEFTSPYFGRPSLKTRAKQFEGVSSPIKNDQALSSTHDIMMPSPKPKRIYPSKKIPQLSSHVQSLSTDSMERQSSPNNTNIVISDTEQDSRLGVNSESKNTSGIVNRDDSDVNLIGSSLPNVAEKNHDNTQESNGNNDSLGKILQNVDKELNEKLVDIDDVAFSSPTRGIPRTSATSKGSNAQLLSNYGDENNQSQDSVWDEGRDNPILLEDEDP</sequence>
<feature type="chain" id="PRO_0000101732" description="Ubiquitin-like-specific protease 2">
    <location>
        <begin position="1"/>
        <end position="1034"/>
    </location>
</feature>
<feature type="region of interest" description="Disordered" evidence="1">
    <location>
        <begin position="1"/>
        <end position="42"/>
    </location>
</feature>
<feature type="region of interest" description="Disordered" evidence="1">
    <location>
        <begin position="71"/>
        <end position="110"/>
    </location>
</feature>
<feature type="region of interest" description="Disordered" evidence="1">
    <location>
        <begin position="388"/>
        <end position="419"/>
    </location>
</feature>
<feature type="region of interest" description="Disordered" evidence="1">
    <location>
        <begin position="731"/>
        <end position="800"/>
    </location>
</feature>
<feature type="region of interest" description="Disordered" evidence="1">
    <location>
        <begin position="841"/>
        <end position="960"/>
    </location>
</feature>
<feature type="region of interest" description="Disordered" evidence="1">
    <location>
        <begin position="983"/>
        <end position="1034"/>
    </location>
</feature>
<feature type="compositionally biased region" description="Low complexity" evidence="1">
    <location>
        <begin position="19"/>
        <end position="33"/>
    </location>
</feature>
<feature type="compositionally biased region" description="Acidic residues" evidence="1">
    <location>
        <begin position="74"/>
        <end position="85"/>
    </location>
</feature>
<feature type="compositionally biased region" description="Low complexity" evidence="1">
    <location>
        <begin position="743"/>
        <end position="756"/>
    </location>
</feature>
<feature type="compositionally biased region" description="Polar residues" evidence="1">
    <location>
        <begin position="845"/>
        <end position="856"/>
    </location>
</feature>
<feature type="compositionally biased region" description="Polar residues" evidence="1">
    <location>
        <begin position="876"/>
        <end position="904"/>
    </location>
</feature>
<feature type="compositionally biased region" description="Polar residues" evidence="1">
    <location>
        <begin position="912"/>
        <end position="923"/>
    </location>
</feature>
<feature type="compositionally biased region" description="Polar residues" evidence="1">
    <location>
        <begin position="992"/>
        <end position="1017"/>
    </location>
</feature>
<feature type="modified residue" description="Phosphoserine" evidence="4">
    <location>
        <position position="788"/>
    </location>
</feature>
<feature type="modified residue" description="Phosphoserine" evidence="4">
    <location>
        <position position="903"/>
    </location>
</feature>
<feature type="modified residue" description="Phosphoserine" evidence="5">
    <location>
        <position position="983"/>
    </location>
</feature>
<feature type="modified residue" description="Phosphoserine" evidence="5">
    <location>
        <position position="984"/>
    </location>
</feature>
<feature type="strand" evidence="6">
    <location>
        <begin position="432"/>
        <end position="435"/>
    </location>
</feature>
<feature type="strand" evidence="6">
    <location>
        <begin position="441"/>
        <end position="444"/>
    </location>
</feature>
<feature type="helix" evidence="6">
    <location>
        <begin position="446"/>
        <end position="449"/>
    </location>
</feature>
<feature type="helix" evidence="6">
    <location>
        <begin position="450"/>
        <end position="452"/>
    </location>
</feature>
<feature type="helix" evidence="6">
    <location>
        <begin position="460"/>
        <end position="476"/>
    </location>
</feature>
<feature type="helix" evidence="6">
    <location>
        <begin position="482"/>
        <end position="484"/>
    </location>
</feature>
<feature type="strand" evidence="6">
    <location>
        <begin position="485"/>
        <end position="487"/>
    </location>
</feature>
<feature type="helix" evidence="6">
    <location>
        <begin position="491"/>
        <end position="496"/>
    </location>
</feature>
<feature type="helix" evidence="6">
    <location>
        <begin position="503"/>
        <end position="507"/>
    </location>
</feature>
<feature type="turn" evidence="6">
    <location>
        <begin position="508"/>
        <end position="513"/>
    </location>
</feature>
<feature type="helix" evidence="6">
    <location>
        <begin position="516"/>
        <end position="518"/>
    </location>
</feature>
<feature type="strand" evidence="6">
    <location>
        <begin position="520"/>
        <end position="528"/>
    </location>
</feature>
<feature type="strand" evidence="6">
    <location>
        <begin position="531"/>
        <end position="539"/>
    </location>
</feature>
<feature type="helix" evidence="6">
    <location>
        <begin position="540"/>
        <end position="545"/>
    </location>
</feature>
<feature type="strand" evidence="6">
    <location>
        <begin position="568"/>
        <end position="573"/>
    </location>
</feature>
<feature type="strand" evidence="6">
    <location>
        <begin position="575"/>
        <end position="577"/>
    </location>
</feature>
<feature type="helix" evidence="6">
    <location>
        <begin position="581"/>
        <end position="599"/>
    </location>
</feature>
<feature type="helix" evidence="6">
    <location>
        <begin position="605"/>
        <end position="607"/>
    </location>
</feature>
<feature type="strand" evidence="6">
    <location>
        <begin position="608"/>
        <end position="612"/>
    </location>
</feature>
<feature type="helix" evidence="6">
    <location>
        <begin position="621"/>
        <end position="623"/>
    </location>
</feature>
<feature type="helix" evidence="6">
    <location>
        <begin position="624"/>
        <end position="637"/>
    </location>
</feature>
<feature type="helix" evidence="6">
    <location>
        <begin position="639"/>
        <end position="647"/>
    </location>
</feature>
<feature type="turn" evidence="6">
    <location>
        <begin position="648"/>
        <end position="650"/>
    </location>
</feature>
<feature type="helix" evidence="6">
    <location>
        <begin position="654"/>
        <end position="664"/>
    </location>
</feature>
<feature type="helix" evidence="6">
    <location>
        <begin position="667"/>
        <end position="670"/>
    </location>
</feature>
<feature type="helix" evidence="6">
    <location>
        <begin position="673"/>
        <end position="694"/>
    </location>
</feature>
<feature type="helix" evidence="6">
    <location>
        <begin position="698"/>
        <end position="703"/>
    </location>
</feature>
<feature type="helix" evidence="7">
    <location>
        <begin position="832"/>
        <end position="839"/>
    </location>
</feature>